<sequence>MAVEMFYDADADLSIIQGRKVAVIGYGSQGHAHSLSLRDSGVQVKVGLKEGSKSREKVTEQGLEVDTPAEVAKWADVIMLLAPDTAQAEIFTNDIEPNLEDGNALFFGHGLNIHFGLIKPPANVTIGMVAPKGPGHLVRRQFVDGKGVPCLIAIDQDPKGEGQALALSYAAAIGGARAGVIKTTFKEETETDLFGEQAVLCGGTEELVKTGFEVMVEAGYAPEMAYFEVLHELKLIVDLMYEGGIARMNYSVSDTAEFGGYLSGPRVIDADTKKRMQDILKDIQDGTFVKRLVANVEGGNKELEALRKKNAEHPIEVTGKKLRDLMSWVDRPITETA</sequence>
<evidence type="ECO:0000255" key="1">
    <source>
        <dbReference type="HAMAP-Rule" id="MF_00435"/>
    </source>
</evidence>
<evidence type="ECO:0000255" key="2">
    <source>
        <dbReference type="PROSITE-ProRule" id="PRU01197"/>
    </source>
</evidence>
<evidence type="ECO:0000255" key="3">
    <source>
        <dbReference type="PROSITE-ProRule" id="PRU01198"/>
    </source>
</evidence>
<protein>
    <recommendedName>
        <fullName evidence="1">Ketol-acid reductoisomerase (NADP(+))</fullName>
        <shortName evidence="1">KARI</shortName>
        <ecNumber evidence="1">1.1.1.86</ecNumber>
    </recommendedName>
    <alternativeName>
        <fullName evidence="1">Acetohydroxy-acid isomeroreductase</fullName>
        <shortName evidence="1">AHIR</shortName>
    </alternativeName>
    <alternativeName>
        <fullName evidence="1">Alpha-keto-beta-hydroxylacyl reductoisomerase</fullName>
    </alternativeName>
    <alternativeName>
        <fullName evidence="1">Ketol-acid reductoisomerase type 1</fullName>
    </alternativeName>
    <alternativeName>
        <fullName evidence="1">Ketol-acid reductoisomerase type I</fullName>
    </alternativeName>
</protein>
<keyword id="KW-0028">Amino-acid biosynthesis</keyword>
<keyword id="KW-0100">Branched-chain amino acid biosynthesis</keyword>
<keyword id="KW-0460">Magnesium</keyword>
<keyword id="KW-0479">Metal-binding</keyword>
<keyword id="KW-0521">NADP</keyword>
<keyword id="KW-0560">Oxidoreductase</keyword>
<feature type="chain" id="PRO_1000050545" description="Ketol-acid reductoisomerase (NADP(+))">
    <location>
        <begin position="1"/>
        <end position="337"/>
    </location>
</feature>
<feature type="domain" description="KARI N-terminal Rossmann" evidence="2">
    <location>
        <begin position="3"/>
        <end position="183"/>
    </location>
</feature>
<feature type="domain" description="KARI C-terminal knotted" evidence="3">
    <location>
        <begin position="184"/>
        <end position="329"/>
    </location>
</feature>
<feature type="active site" evidence="1">
    <location>
        <position position="109"/>
    </location>
</feature>
<feature type="binding site" evidence="1">
    <location>
        <begin position="26"/>
        <end position="29"/>
    </location>
    <ligand>
        <name>NADP(+)</name>
        <dbReference type="ChEBI" id="CHEBI:58349"/>
    </ligand>
</feature>
<feature type="binding site" evidence="1">
    <location>
        <position position="49"/>
    </location>
    <ligand>
        <name>NADP(+)</name>
        <dbReference type="ChEBI" id="CHEBI:58349"/>
    </ligand>
</feature>
<feature type="binding site" evidence="1">
    <location>
        <position position="52"/>
    </location>
    <ligand>
        <name>NADP(+)</name>
        <dbReference type="ChEBI" id="CHEBI:58349"/>
    </ligand>
</feature>
<feature type="binding site" evidence="1">
    <location>
        <position position="54"/>
    </location>
    <ligand>
        <name>NADP(+)</name>
        <dbReference type="ChEBI" id="CHEBI:58349"/>
    </ligand>
</feature>
<feature type="binding site" evidence="1">
    <location>
        <begin position="84"/>
        <end position="87"/>
    </location>
    <ligand>
        <name>NADP(+)</name>
        <dbReference type="ChEBI" id="CHEBI:58349"/>
    </ligand>
</feature>
<feature type="binding site" evidence="1">
    <location>
        <position position="135"/>
    </location>
    <ligand>
        <name>NADP(+)</name>
        <dbReference type="ChEBI" id="CHEBI:58349"/>
    </ligand>
</feature>
<feature type="binding site" evidence="1">
    <location>
        <position position="192"/>
    </location>
    <ligand>
        <name>Mg(2+)</name>
        <dbReference type="ChEBI" id="CHEBI:18420"/>
        <label>1</label>
    </ligand>
</feature>
<feature type="binding site" evidence="1">
    <location>
        <position position="192"/>
    </location>
    <ligand>
        <name>Mg(2+)</name>
        <dbReference type="ChEBI" id="CHEBI:18420"/>
        <label>2</label>
    </ligand>
</feature>
<feature type="binding site" evidence="1">
    <location>
        <position position="196"/>
    </location>
    <ligand>
        <name>Mg(2+)</name>
        <dbReference type="ChEBI" id="CHEBI:18420"/>
        <label>1</label>
    </ligand>
</feature>
<feature type="binding site" evidence="1">
    <location>
        <position position="228"/>
    </location>
    <ligand>
        <name>Mg(2+)</name>
        <dbReference type="ChEBI" id="CHEBI:18420"/>
        <label>2</label>
    </ligand>
</feature>
<feature type="binding site" evidence="1">
    <location>
        <position position="232"/>
    </location>
    <ligand>
        <name>Mg(2+)</name>
        <dbReference type="ChEBI" id="CHEBI:18420"/>
        <label>2</label>
    </ligand>
</feature>
<feature type="binding site" evidence="1">
    <location>
        <position position="253"/>
    </location>
    <ligand>
        <name>substrate</name>
    </ligand>
</feature>
<proteinExistence type="inferred from homology"/>
<comment type="function">
    <text evidence="1">Involved in the biosynthesis of branched-chain amino acids (BCAA). Catalyzes an alkyl-migration followed by a ketol-acid reduction of (S)-2-acetolactate (S2AL) to yield (R)-2,3-dihydroxy-isovalerate. In the isomerase reaction, S2AL is rearranged via a Mg-dependent methyl migration to produce 3-hydroxy-3-methyl-2-ketobutyrate (HMKB). In the reductase reaction, this 2-ketoacid undergoes a metal-dependent reduction by NADPH to yield (R)-2,3-dihydroxy-isovalerate.</text>
</comment>
<comment type="catalytic activity">
    <reaction evidence="1">
        <text>(2R)-2,3-dihydroxy-3-methylbutanoate + NADP(+) = (2S)-2-acetolactate + NADPH + H(+)</text>
        <dbReference type="Rhea" id="RHEA:22068"/>
        <dbReference type="ChEBI" id="CHEBI:15378"/>
        <dbReference type="ChEBI" id="CHEBI:49072"/>
        <dbReference type="ChEBI" id="CHEBI:57783"/>
        <dbReference type="ChEBI" id="CHEBI:58349"/>
        <dbReference type="ChEBI" id="CHEBI:58476"/>
        <dbReference type="EC" id="1.1.1.86"/>
    </reaction>
</comment>
<comment type="catalytic activity">
    <reaction evidence="1">
        <text>(2R,3R)-2,3-dihydroxy-3-methylpentanoate + NADP(+) = (S)-2-ethyl-2-hydroxy-3-oxobutanoate + NADPH + H(+)</text>
        <dbReference type="Rhea" id="RHEA:13493"/>
        <dbReference type="ChEBI" id="CHEBI:15378"/>
        <dbReference type="ChEBI" id="CHEBI:49256"/>
        <dbReference type="ChEBI" id="CHEBI:49258"/>
        <dbReference type="ChEBI" id="CHEBI:57783"/>
        <dbReference type="ChEBI" id="CHEBI:58349"/>
        <dbReference type="EC" id="1.1.1.86"/>
    </reaction>
</comment>
<comment type="cofactor">
    <cofactor evidence="1">
        <name>Mg(2+)</name>
        <dbReference type="ChEBI" id="CHEBI:18420"/>
    </cofactor>
    <text evidence="1">Binds 2 magnesium ions per subunit.</text>
</comment>
<comment type="pathway">
    <text evidence="1">Amino-acid biosynthesis; L-isoleucine biosynthesis; L-isoleucine from 2-oxobutanoate: step 2/4.</text>
</comment>
<comment type="pathway">
    <text evidence="1">Amino-acid biosynthesis; L-valine biosynthesis; L-valine from pyruvate: step 2/4.</text>
</comment>
<comment type="similarity">
    <text evidence="1">Belongs to the ketol-acid reductoisomerase family.</text>
</comment>
<name>ILVC_MYCVP</name>
<gene>
    <name evidence="1" type="primary">ilvC</name>
    <name type="ordered locus">Mvan_2124</name>
</gene>
<reference key="1">
    <citation type="submission" date="2006-12" db="EMBL/GenBank/DDBJ databases">
        <title>Complete sequence of Mycobacterium vanbaalenii PYR-1.</title>
        <authorList>
            <consortium name="US DOE Joint Genome Institute"/>
            <person name="Copeland A."/>
            <person name="Lucas S."/>
            <person name="Lapidus A."/>
            <person name="Barry K."/>
            <person name="Detter J.C."/>
            <person name="Glavina del Rio T."/>
            <person name="Hammon N."/>
            <person name="Israni S."/>
            <person name="Dalin E."/>
            <person name="Tice H."/>
            <person name="Pitluck S."/>
            <person name="Singan V."/>
            <person name="Schmutz J."/>
            <person name="Larimer F."/>
            <person name="Land M."/>
            <person name="Hauser L."/>
            <person name="Kyrpides N."/>
            <person name="Anderson I.J."/>
            <person name="Miller C."/>
            <person name="Richardson P."/>
        </authorList>
    </citation>
    <scope>NUCLEOTIDE SEQUENCE [LARGE SCALE GENOMIC DNA]</scope>
    <source>
        <strain>DSM 7251 / JCM 13017 / BCRC 16820 / KCTC 9966 / NRRL B-24157 / PYR-1</strain>
    </source>
</reference>
<organism>
    <name type="scientific">Mycolicibacterium vanbaalenii (strain DSM 7251 / JCM 13017 / BCRC 16820 / KCTC 9966 / NRRL B-24157 / PYR-1)</name>
    <name type="common">Mycobacterium vanbaalenii</name>
    <dbReference type="NCBI Taxonomy" id="350058"/>
    <lineage>
        <taxon>Bacteria</taxon>
        <taxon>Bacillati</taxon>
        <taxon>Actinomycetota</taxon>
        <taxon>Actinomycetes</taxon>
        <taxon>Mycobacteriales</taxon>
        <taxon>Mycobacteriaceae</taxon>
        <taxon>Mycolicibacterium</taxon>
    </lineage>
</organism>
<dbReference type="EC" id="1.1.1.86" evidence="1"/>
<dbReference type="EMBL" id="CP000511">
    <property type="protein sequence ID" value="ABM12939.1"/>
    <property type="molecule type" value="Genomic_DNA"/>
</dbReference>
<dbReference type="RefSeq" id="WP_011779353.1">
    <property type="nucleotide sequence ID" value="NC_008726.1"/>
</dbReference>
<dbReference type="SMR" id="A1T6Y9"/>
<dbReference type="STRING" id="350058.Mvan_2124"/>
<dbReference type="KEGG" id="mva:Mvan_2124"/>
<dbReference type="eggNOG" id="COG0059">
    <property type="taxonomic scope" value="Bacteria"/>
</dbReference>
<dbReference type="HOGENOM" id="CLU_033821_0_1_11"/>
<dbReference type="UniPathway" id="UPA00047">
    <property type="reaction ID" value="UER00056"/>
</dbReference>
<dbReference type="UniPathway" id="UPA00049">
    <property type="reaction ID" value="UER00060"/>
</dbReference>
<dbReference type="Proteomes" id="UP000009159">
    <property type="component" value="Chromosome"/>
</dbReference>
<dbReference type="GO" id="GO:0005829">
    <property type="term" value="C:cytosol"/>
    <property type="evidence" value="ECO:0007669"/>
    <property type="project" value="TreeGrafter"/>
</dbReference>
<dbReference type="GO" id="GO:0004455">
    <property type="term" value="F:ketol-acid reductoisomerase activity"/>
    <property type="evidence" value="ECO:0007669"/>
    <property type="project" value="UniProtKB-UniRule"/>
</dbReference>
<dbReference type="GO" id="GO:0000287">
    <property type="term" value="F:magnesium ion binding"/>
    <property type="evidence" value="ECO:0007669"/>
    <property type="project" value="UniProtKB-UniRule"/>
</dbReference>
<dbReference type="GO" id="GO:0050661">
    <property type="term" value="F:NADP binding"/>
    <property type="evidence" value="ECO:0007669"/>
    <property type="project" value="InterPro"/>
</dbReference>
<dbReference type="GO" id="GO:0009097">
    <property type="term" value="P:isoleucine biosynthetic process"/>
    <property type="evidence" value="ECO:0007669"/>
    <property type="project" value="UniProtKB-UniRule"/>
</dbReference>
<dbReference type="GO" id="GO:0009099">
    <property type="term" value="P:L-valine biosynthetic process"/>
    <property type="evidence" value="ECO:0007669"/>
    <property type="project" value="UniProtKB-UniRule"/>
</dbReference>
<dbReference type="FunFam" id="3.40.50.720:FF:000023">
    <property type="entry name" value="Ketol-acid reductoisomerase (NADP(+))"/>
    <property type="match status" value="1"/>
</dbReference>
<dbReference type="Gene3D" id="6.10.240.10">
    <property type="match status" value="1"/>
</dbReference>
<dbReference type="Gene3D" id="3.40.50.720">
    <property type="entry name" value="NAD(P)-binding Rossmann-like Domain"/>
    <property type="match status" value="1"/>
</dbReference>
<dbReference type="HAMAP" id="MF_00435">
    <property type="entry name" value="IlvC"/>
    <property type="match status" value="1"/>
</dbReference>
<dbReference type="InterPro" id="IPR008927">
    <property type="entry name" value="6-PGluconate_DH-like_C_sf"/>
</dbReference>
<dbReference type="InterPro" id="IPR013023">
    <property type="entry name" value="KARI"/>
</dbReference>
<dbReference type="InterPro" id="IPR000506">
    <property type="entry name" value="KARI_C"/>
</dbReference>
<dbReference type="InterPro" id="IPR013116">
    <property type="entry name" value="KARI_N"/>
</dbReference>
<dbReference type="InterPro" id="IPR014359">
    <property type="entry name" value="KARI_prok"/>
</dbReference>
<dbReference type="InterPro" id="IPR036291">
    <property type="entry name" value="NAD(P)-bd_dom_sf"/>
</dbReference>
<dbReference type="NCBIfam" id="TIGR00465">
    <property type="entry name" value="ilvC"/>
    <property type="match status" value="1"/>
</dbReference>
<dbReference type="NCBIfam" id="NF004017">
    <property type="entry name" value="PRK05479.1"/>
    <property type="match status" value="1"/>
</dbReference>
<dbReference type="PANTHER" id="PTHR21371">
    <property type="entry name" value="KETOL-ACID REDUCTOISOMERASE, MITOCHONDRIAL"/>
    <property type="match status" value="1"/>
</dbReference>
<dbReference type="PANTHER" id="PTHR21371:SF1">
    <property type="entry name" value="KETOL-ACID REDUCTOISOMERASE, MITOCHONDRIAL"/>
    <property type="match status" value="1"/>
</dbReference>
<dbReference type="Pfam" id="PF01450">
    <property type="entry name" value="KARI_C"/>
    <property type="match status" value="1"/>
</dbReference>
<dbReference type="Pfam" id="PF07991">
    <property type="entry name" value="KARI_N"/>
    <property type="match status" value="1"/>
</dbReference>
<dbReference type="PIRSF" id="PIRSF000116">
    <property type="entry name" value="IlvC_gammaproteo"/>
    <property type="match status" value="1"/>
</dbReference>
<dbReference type="SUPFAM" id="SSF48179">
    <property type="entry name" value="6-phosphogluconate dehydrogenase C-terminal domain-like"/>
    <property type="match status" value="1"/>
</dbReference>
<dbReference type="SUPFAM" id="SSF51735">
    <property type="entry name" value="NAD(P)-binding Rossmann-fold domains"/>
    <property type="match status" value="1"/>
</dbReference>
<dbReference type="PROSITE" id="PS51851">
    <property type="entry name" value="KARI_C"/>
    <property type="match status" value="1"/>
</dbReference>
<dbReference type="PROSITE" id="PS51850">
    <property type="entry name" value="KARI_N"/>
    <property type="match status" value="1"/>
</dbReference>
<accession>A1T6Y9</accession>